<gene>
    <name evidence="1" type="primary">mnmE</name>
    <name evidence="1" type="synonym">trmE</name>
    <name type="ordered locus">Clos_2872</name>
</gene>
<dbReference type="EC" id="3.6.-.-" evidence="1"/>
<dbReference type="EMBL" id="CP000853">
    <property type="protein sequence ID" value="ABW20401.1"/>
    <property type="molecule type" value="Genomic_DNA"/>
</dbReference>
<dbReference type="RefSeq" id="WP_012160708.1">
    <property type="nucleotide sequence ID" value="NC_009922.1"/>
</dbReference>
<dbReference type="SMR" id="A8MKR9"/>
<dbReference type="STRING" id="350688.Clos_2872"/>
<dbReference type="KEGG" id="aoe:Clos_2872"/>
<dbReference type="eggNOG" id="COG0486">
    <property type="taxonomic scope" value="Bacteria"/>
</dbReference>
<dbReference type="HOGENOM" id="CLU_019624_4_1_9"/>
<dbReference type="OrthoDB" id="9805918at2"/>
<dbReference type="Proteomes" id="UP000000269">
    <property type="component" value="Chromosome"/>
</dbReference>
<dbReference type="GO" id="GO:0005829">
    <property type="term" value="C:cytosol"/>
    <property type="evidence" value="ECO:0007669"/>
    <property type="project" value="TreeGrafter"/>
</dbReference>
<dbReference type="GO" id="GO:0005525">
    <property type="term" value="F:GTP binding"/>
    <property type="evidence" value="ECO:0007669"/>
    <property type="project" value="UniProtKB-UniRule"/>
</dbReference>
<dbReference type="GO" id="GO:0003924">
    <property type="term" value="F:GTPase activity"/>
    <property type="evidence" value="ECO:0007669"/>
    <property type="project" value="UniProtKB-UniRule"/>
</dbReference>
<dbReference type="GO" id="GO:0046872">
    <property type="term" value="F:metal ion binding"/>
    <property type="evidence" value="ECO:0007669"/>
    <property type="project" value="UniProtKB-KW"/>
</dbReference>
<dbReference type="GO" id="GO:0030488">
    <property type="term" value="P:tRNA methylation"/>
    <property type="evidence" value="ECO:0007669"/>
    <property type="project" value="TreeGrafter"/>
</dbReference>
<dbReference type="GO" id="GO:0002098">
    <property type="term" value="P:tRNA wobble uridine modification"/>
    <property type="evidence" value="ECO:0007669"/>
    <property type="project" value="TreeGrafter"/>
</dbReference>
<dbReference type="CDD" id="cd04164">
    <property type="entry name" value="trmE"/>
    <property type="match status" value="1"/>
</dbReference>
<dbReference type="CDD" id="cd14858">
    <property type="entry name" value="TrmE_N"/>
    <property type="match status" value="1"/>
</dbReference>
<dbReference type="FunFam" id="3.30.1360.120:FF:000003">
    <property type="entry name" value="tRNA modification GTPase MnmE"/>
    <property type="match status" value="1"/>
</dbReference>
<dbReference type="FunFam" id="3.40.50.300:FF:000494">
    <property type="entry name" value="tRNA modification GTPase MnmE"/>
    <property type="match status" value="1"/>
</dbReference>
<dbReference type="Gene3D" id="3.40.50.300">
    <property type="entry name" value="P-loop containing nucleotide triphosphate hydrolases"/>
    <property type="match status" value="1"/>
</dbReference>
<dbReference type="Gene3D" id="3.30.1360.120">
    <property type="entry name" value="Probable tRNA modification gtpase trme, domain 1"/>
    <property type="match status" value="1"/>
</dbReference>
<dbReference type="Gene3D" id="1.20.120.430">
    <property type="entry name" value="tRNA modification GTPase MnmE domain 2"/>
    <property type="match status" value="1"/>
</dbReference>
<dbReference type="HAMAP" id="MF_00379">
    <property type="entry name" value="GTPase_MnmE"/>
    <property type="match status" value="1"/>
</dbReference>
<dbReference type="InterPro" id="IPR031168">
    <property type="entry name" value="G_TrmE"/>
</dbReference>
<dbReference type="InterPro" id="IPR006073">
    <property type="entry name" value="GTP-bd"/>
</dbReference>
<dbReference type="InterPro" id="IPR018948">
    <property type="entry name" value="GTP-bd_TrmE_N"/>
</dbReference>
<dbReference type="InterPro" id="IPR004520">
    <property type="entry name" value="GTPase_MnmE"/>
</dbReference>
<dbReference type="InterPro" id="IPR027368">
    <property type="entry name" value="MnmE_dom2"/>
</dbReference>
<dbReference type="InterPro" id="IPR025867">
    <property type="entry name" value="MnmE_helical"/>
</dbReference>
<dbReference type="InterPro" id="IPR027417">
    <property type="entry name" value="P-loop_NTPase"/>
</dbReference>
<dbReference type="InterPro" id="IPR005225">
    <property type="entry name" value="Small_GTP-bd"/>
</dbReference>
<dbReference type="InterPro" id="IPR027266">
    <property type="entry name" value="TrmE/GcvT_dom1"/>
</dbReference>
<dbReference type="NCBIfam" id="TIGR00450">
    <property type="entry name" value="mnmE_trmE_thdF"/>
    <property type="match status" value="1"/>
</dbReference>
<dbReference type="NCBIfam" id="NF003661">
    <property type="entry name" value="PRK05291.1-3"/>
    <property type="match status" value="1"/>
</dbReference>
<dbReference type="NCBIfam" id="TIGR00231">
    <property type="entry name" value="small_GTP"/>
    <property type="match status" value="1"/>
</dbReference>
<dbReference type="PANTHER" id="PTHR42714">
    <property type="entry name" value="TRNA MODIFICATION GTPASE GTPBP3"/>
    <property type="match status" value="1"/>
</dbReference>
<dbReference type="PANTHER" id="PTHR42714:SF2">
    <property type="entry name" value="TRNA MODIFICATION GTPASE GTPBP3, MITOCHONDRIAL"/>
    <property type="match status" value="1"/>
</dbReference>
<dbReference type="Pfam" id="PF01926">
    <property type="entry name" value="MMR_HSR1"/>
    <property type="match status" value="1"/>
</dbReference>
<dbReference type="Pfam" id="PF12631">
    <property type="entry name" value="MnmE_helical"/>
    <property type="match status" value="1"/>
</dbReference>
<dbReference type="Pfam" id="PF10396">
    <property type="entry name" value="TrmE_N"/>
    <property type="match status" value="1"/>
</dbReference>
<dbReference type="SUPFAM" id="SSF52540">
    <property type="entry name" value="P-loop containing nucleoside triphosphate hydrolases"/>
    <property type="match status" value="1"/>
</dbReference>
<dbReference type="SUPFAM" id="SSF116878">
    <property type="entry name" value="TrmE connector domain"/>
    <property type="match status" value="1"/>
</dbReference>
<dbReference type="PROSITE" id="PS51709">
    <property type="entry name" value="G_TRME"/>
    <property type="match status" value="1"/>
</dbReference>
<sequence>MYIDDTIAAIATAPGEAGIGIVRISGEKAIELIDKIFKSKDHKVLSQYKSRRITYGHIIDPKTEKVVDEVLVSYMKGPNTYTREDIVEINCHGGMIPVKNILELVLRVGARMAEPGEFTKRAFLNGRIDLAQAEAIMDLISAKTEKGFDVALSQLEGSLSKKVAKVREKLLDMLAHVEVSIDFAEDDVDEVALDYLLNKSLEVEGDIQKLLDTADTGKIIREGLSTVIVGKPNVGKSSLLNALVRESRAIVTDVPGTTRDIIEEHLNIKGIPLRLIDTAGIRDTEDIVEKIGVERSKELFNLADLIIVMLDASRELTEEDLRIIELIENKRALVIINKTDLQQKLNLTPIQEIIQDKKIIKVSLIEEIGLEEIEDALAEMVYKGGAKAKDSLLVTNVRHKNALERALDSIIDGTKAIEQKLPLDFVEVDIKNSWKALGEITGDTVEEDIIDHIFKNFCIGK</sequence>
<name>MNME_ALKOO</name>
<feature type="chain" id="PRO_1000060034" description="tRNA modification GTPase MnmE">
    <location>
        <begin position="1"/>
        <end position="461"/>
    </location>
</feature>
<feature type="domain" description="TrmE-type G">
    <location>
        <begin position="223"/>
        <end position="382"/>
    </location>
</feature>
<feature type="binding site" evidence="1">
    <location>
        <position position="23"/>
    </location>
    <ligand>
        <name>(6S)-5-formyl-5,6,7,8-tetrahydrofolate</name>
        <dbReference type="ChEBI" id="CHEBI:57457"/>
    </ligand>
</feature>
<feature type="binding site" evidence="1">
    <location>
        <position position="88"/>
    </location>
    <ligand>
        <name>(6S)-5-formyl-5,6,7,8-tetrahydrofolate</name>
        <dbReference type="ChEBI" id="CHEBI:57457"/>
    </ligand>
</feature>
<feature type="binding site" evidence="1">
    <location>
        <position position="127"/>
    </location>
    <ligand>
        <name>(6S)-5-formyl-5,6,7,8-tetrahydrofolate</name>
        <dbReference type="ChEBI" id="CHEBI:57457"/>
    </ligand>
</feature>
<feature type="binding site" evidence="1">
    <location>
        <begin position="233"/>
        <end position="238"/>
    </location>
    <ligand>
        <name>GTP</name>
        <dbReference type="ChEBI" id="CHEBI:37565"/>
    </ligand>
</feature>
<feature type="binding site" evidence="1">
    <location>
        <position position="233"/>
    </location>
    <ligand>
        <name>K(+)</name>
        <dbReference type="ChEBI" id="CHEBI:29103"/>
    </ligand>
</feature>
<feature type="binding site" evidence="1">
    <location>
        <position position="237"/>
    </location>
    <ligand>
        <name>Mg(2+)</name>
        <dbReference type="ChEBI" id="CHEBI:18420"/>
    </ligand>
</feature>
<feature type="binding site" evidence="1">
    <location>
        <begin position="252"/>
        <end position="258"/>
    </location>
    <ligand>
        <name>GTP</name>
        <dbReference type="ChEBI" id="CHEBI:37565"/>
    </ligand>
</feature>
<feature type="binding site" evidence="1">
    <location>
        <position position="252"/>
    </location>
    <ligand>
        <name>K(+)</name>
        <dbReference type="ChEBI" id="CHEBI:29103"/>
    </ligand>
</feature>
<feature type="binding site" evidence="1">
    <location>
        <position position="254"/>
    </location>
    <ligand>
        <name>K(+)</name>
        <dbReference type="ChEBI" id="CHEBI:29103"/>
    </ligand>
</feature>
<feature type="binding site" evidence="1">
    <location>
        <position position="257"/>
    </location>
    <ligand>
        <name>K(+)</name>
        <dbReference type="ChEBI" id="CHEBI:29103"/>
    </ligand>
</feature>
<feature type="binding site" evidence="1">
    <location>
        <position position="258"/>
    </location>
    <ligand>
        <name>Mg(2+)</name>
        <dbReference type="ChEBI" id="CHEBI:18420"/>
    </ligand>
</feature>
<feature type="binding site" evidence="1">
    <location>
        <begin position="277"/>
        <end position="280"/>
    </location>
    <ligand>
        <name>GTP</name>
        <dbReference type="ChEBI" id="CHEBI:37565"/>
    </ligand>
</feature>
<feature type="binding site" evidence="1">
    <location>
        <position position="461"/>
    </location>
    <ligand>
        <name>(6S)-5-formyl-5,6,7,8-tetrahydrofolate</name>
        <dbReference type="ChEBI" id="CHEBI:57457"/>
    </ligand>
</feature>
<proteinExistence type="inferred from homology"/>
<keyword id="KW-0963">Cytoplasm</keyword>
<keyword id="KW-0342">GTP-binding</keyword>
<keyword id="KW-0378">Hydrolase</keyword>
<keyword id="KW-0460">Magnesium</keyword>
<keyword id="KW-0479">Metal-binding</keyword>
<keyword id="KW-0547">Nucleotide-binding</keyword>
<keyword id="KW-0630">Potassium</keyword>
<keyword id="KW-1185">Reference proteome</keyword>
<keyword id="KW-0819">tRNA processing</keyword>
<evidence type="ECO:0000255" key="1">
    <source>
        <dbReference type="HAMAP-Rule" id="MF_00379"/>
    </source>
</evidence>
<accession>A8MKR9</accession>
<comment type="function">
    <text evidence="1">Exhibits a very high intrinsic GTPase hydrolysis rate. Involved in the addition of a carboxymethylaminomethyl (cmnm) group at the wobble position (U34) of certain tRNAs, forming tRNA-cmnm(5)s(2)U34.</text>
</comment>
<comment type="cofactor">
    <cofactor evidence="1">
        <name>K(+)</name>
        <dbReference type="ChEBI" id="CHEBI:29103"/>
    </cofactor>
    <text evidence="1">Binds 1 potassium ion per subunit.</text>
</comment>
<comment type="subunit">
    <text evidence="1">Homodimer. Heterotetramer of two MnmE and two MnmG subunits.</text>
</comment>
<comment type="subcellular location">
    <subcellularLocation>
        <location evidence="1">Cytoplasm</location>
    </subcellularLocation>
</comment>
<comment type="similarity">
    <text evidence="1">Belongs to the TRAFAC class TrmE-Era-EngA-EngB-Septin-like GTPase superfamily. TrmE GTPase family.</text>
</comment>
<protein>
    <recommendedName>
        <fullName evidence="1">tRNA modification GTPase MnmE</fullName>
        <ecNumber evidence="1">3.6.-.-</ecNumber>
    </recommendedName>
</protein>
<organism>
    <name type="scientific">Alkaliphilus oremlandii (strain OhILAs)</name>
    <name type="common">Clostridium oremlandii (strain OhILAs)</name>
    <dbReference type="NCBI Taxonomy" id="350688"/>
    <lineage>
        <taxon>Bacteria</taxon>
        <taxon>Bacillati</taxon>
        <taxon>Bacillota</taxon>
        <taxon>Clostridia</taxon>
        <taxon>Peptostreptococcales</taxon>
        <taxon>Natronincolaceae</taxon>
        <taxon>Alkaliphilus</taxon>
    </lineage>
</organism>
<reference key="1">
    <citation type="submission" date="2007-10" db="EMBL/GenBank/DDBJ databases">
        <title>Complete genome of Alkaliphilus oremlandii OhILAs.</title>
        <authorList>
            <person name="Copeland A."/>
            <person name="Lucas S."/>
            <person name="Lapidus A."/>
            <person name="Barry K."/>
            <person name="Detter J.C."/>
            <person name="Glavina del Rio T."/>
            <person name="Hammon N."/>
            <person name="Israni S."/>
            <person name="Dalin E."/>
            <person name="Tice H."/>
            <person name="Pitluck S."/>
            <person name="Chain P."/>
            <person name="Malfatti S."/>
            <person name="Shin M."/>
            <person name="Vergez L."/>
            <person name="Schmutz J."/>
            <person name="Larimer F."/>
            <person name="Land M."/>
            <person name="Hauser L."/>
            <person name="Kyrpides N."/>
            <person name="Mikhailova N."/>
            <person name="Stolz J.F."/>
            <person name="Dawson A."/>
            <person name="Fisher E."/>
            <person name="Crable B."/>
            <person name="Perera E."/>
            <person name="Lisak J."/>
            <person name="Ranganathan M."/>
            <person name="Basu P."/>
            <person name="Richardson P."/>
        </authorList>
    </citation>
    <scope>NUCLEOTIDE SEQUENCE [LARGE SCALE GENOMIC DNA]</scope>
    <source>
        <strain>OhILAs</strain>
    </source>
</reference>